<reference key="1">
    <citation type="journal article" date="2002" name="Nature">
        <title>The genome sequence of Schizosaccharomyces pombe.</title>
        <authorList>
            <person name="Wood V."/>
            <person name="Gwilliam R."/>
            <person name="Rajandream M.A."/>
            <person name="Lyne M.H."/>
            <person name="Lyne R."/>
            <person name="Stewart A."/>
            <person name="Sgouros J.G."/>
            <person name="Peat N."/>
            <person name="Hayles J."/>
            <person name="Baker S.G."/>
            <person name="Basham D."/>
            <person name="Bowman S."/>
            <person name="Brooks K."/>
            <person name="Brown D."/>
            <person name="Brown S."/>
            <person name="Chillingworth T."/>
            <person name="Churcher C.M."/>
            <person name="Collins M."/>
            <person name="Connor R."/>
            <person name="Cronin A."/>
            <person name="Davis P."/>
            <person name="Feltwell T."/>
            <person name="Fraser A."/>
            <person name="Gentles S."/>
            <person name="Goble A."/>
            <person name="Hamlin N."/>
            <person name="Harris D.E."/>
            <person name="Hidalgo J."/>
            <person name="Hodgson G."/>
            <person name="Holroyd S."/>
            <person name="Hornsby T."/>
            <person name="Howarth S."/>
            <person name="Huckle E.J."/>
            <person name="Hunt S."/>
            <person name="Jagels K."/>
            <person name="James K.D."/>
            <person name="Jones L."/>
            <person name="Jones M."/>
            <person name="Leather S."/>
            <person name="McDonald S."/>
            <person name="McLean J."/>
            <person name="Mooney P."/>
            <person name="Moule S."/>
            <person name="Mungall K.L."/>
            <person name="Murphy L.D."/>
            <person name="Niblett D."/>
            <person name="Odell C."/>
            <person name="Oliver K."/>
            <person name="O'Neil S."/>
            <person name="Pearson D."/>
            <person name="Quail M.A."/>
            <person name="Rabbinowitsch E."/>
            <person name="Rutherford K.M."/>
            <person name="Rutter S."/>
            <person name="Saunders D."/>
            <person name="Seeger K."/>
            <person name="Sharp S."/>
            <person name="Skelton J."/>
            <person name="Simmonds M.N."/>
            <person name="Squares R."/>
            <person name="Squares S."/>
            <person name="Stevens K."/>
            <person name="Taylor K."/>
            <person name="Taylor R.G."/>
            <person name="Tivey A."/>
            <person name="Walsh S.V."/>
            <person name="Warren T."/>
            <person name="Whitehead S."/>
            <person name="Woodward J.R."/>
            <person name="Volckaert G."/>
            <person name="Aert R."/>
            <person name="Robben J."/>
            <person name="Grymonprez B."/>
            <person name="Weltjens I."/>
            <person name="Vanstreels E."/>
            <person name="Rieger M."/>
            <person name="Schaefer M."/>
            <person name="Mueller-Auer S."/>
            <person name="Gabel C."/>
            <person name="Fuchs M."/>
            <person name="Duesterhoeft A."/>
            <person name="Fritzc C."/>
            <person name="Holzer E."/>
            <person name="Moestl D."/>
            <person name="Hilbert H."/>
            <person name="Borzym K."/>
            <person name="Langer I."/>
            <person name="Beck A."/>
            <person name="Lehrach H."/>
            <person name="Reinhardt R."/>
            <person name="Pohl T.M."/>
            <person name="Eger P."/>
            <person name="Zimmermann W."/>
            <person name="Wedler H."/>
            <person name="Wambutt R."/>
            <person name="Purnelle B."/>
            <person name="Goffeau A."/>
            <person name="Cadieu E."/>
            <person name="Dreano S."/>
            <person name="Gloux S."/>
            <person name="Lelaure V."/>
            <person name="Mottier S."/>
            <person name="Galibert F."/>
            <person name="Aves S.J."/>
            <person name="Xiang Z."/>
            <person name="Hunt C."/>
            <person name="Moore K."/>
            <person name="Hurst S.M."/>
            <person name="Lucas M."/>
            <person name="Rochet M."/>
            <person name="Gaillardin C."/>
            <person name="Tallada V.A."/>
            <person name="Garzon A."/>
            <person name="Thode G."/>
            <person name="Daga R.R."/>
            <person name="Cruzado L."/>
            <person name="Jimenez J."/>
            <person name="Sanchez M."/>
            <person name="del Rey F."/>
            <person name="Benito J."/>
            <person name="Dominguez A."/>
            <person name="Revuelta J.L."/>
            <person name="Moreno S."/>
            <person name="Armstrong J."/>
            <person name="Forsburg S.L."/>
            <person name="Cerutti L."/>
            <person name="Lowe T."/>
            <person name="McCombie W.R."/>
            <person name="Paulsen I."/>
            <person name="Potashkin J."/>
            <person name="Shpakovski G.V."/>
            <person name="Ussery D."/>
            <person name="Barrell B.G."/>
            <person name="Nurse P."/>
        </authorList>
    </citation>
    <scope>NUCLEOTIDE SEQUENCE [LARGE SCALE GENOMIC DNA]</scope>
    <source>
        <strain>972 / ATCC 24843</strain>
    </source>
</reference>
<reference key="2">
    <citation type="submission" date="2003-06" db="EMBL/GenBank/DDBJ databases">
        <authorList>
            <person name="Gwilliam R."/>
            <person name="Barrell B.G."/>
            <person name="Rajandream M.A."/>
            <person name="Wedler H."/>
            <person name="Wambutt R."/>
        </authorList>
    </citation>
    <scope>SEQUENCE REVISION TO N-TERMINUS</scope>
</reference>
<reference key="3">
    <citation type="journal article" date="2001" name="J. Cell Sci.">
        <title>The S. pombe aurora-related kinase Ark1 associates with mitotic structures in a stage dependent manner and is required for chromosome segregation.</title>
        <authorList>
            <person name="Petersen J."/>
            <person name="Paris J."/>
            <person name="Willer M."/>
            <person name="Philippe M."/>
            <person name="Hagan I.M."/>
        </authorList>
    </citation>
    <scope>FUNCTION</scope>
</reference>
<reference key="4">
    <citation type="journal article" date="2002" name="Mol. Biol. Cell">
        <title>The Schizosaccharomyces pombe aurora-related kinase Ark1 interacts with the inner centromere protein Pic1 and mediates chromosome segregation and cytokinesis.</title>
        <authorList>
            <person name="Leverson J.D."/>
            <person name="Huang H.-K."/>
            <person name="Forsburg S.L."/>
            <person name="Hunter T."/>
        </authorList>
    </citation>
    <scope>FUNCTION</scope>
    <scope>INTERACTION WITH PIC1</scope>
    <scope>MUTAGENESIS OF LYS-118</scope>
</reference>
<reference key="5">
    <citation type="journal article" date="2003" name="Curr. Biol.">
        <title>S. pombe aurora kinase/survivin is required for chromosome condensation and the spindle checkpoint attachment response.</title>
        <authorList>
            <person name="Petersen J."/>
            <person name="Hagan I.M."/>
        </authorList>
    </citation>
    <scope>FUNCTION</scope>
    <scope>INTERACTION WITH BIR1 AND MAD3</scope>
    <scope>IDENTIFICATION OF THE TRANSLATION INITIATION CODON</scope>
</reference>
<reference key="6">
    <citation type="journal article" date="2005" name="Mol. Cell. Biol.">
        <title>Suppressors of Bir1p (Survivin) identify roles for the chromosomal passenger protein Pic1p (INCENP) and the replication initiation factor Psf2p in chromosome segregation.</title>
        <authorList>
            <person name="Huang H.-K."/>
            <person name="Bailis J.M."/>
            <person name="Leverson J.D."/>
            <person name="Gomez E.B."/>
            <person name="Forsburg S.L."/>
            <person name="Hunter T."/>
        </authorList>
    </citation>
    <scope>INTERACTION WITH PIC1</scope>
</reference>
<reference key="7">
    <citation type="journal article" date="2006" name="Nat. Biotechnol.">
        <title>ORFeome cloning and global analysis of protein localization in the fission yeast Schizosaccharomyces pombe.</title>
        <authorList>
            <person name="Matsuyama A."/>
            <person name="Arai R."/>
            <person name="Yashiroda Y."/>
            <person name="Shirai A."/>
            <person name="Kamata A."/>
            <person name="Sekido S."/>
            <person name="Kobayashi Y."/>
            <person name="Hashimoto A."/>
            <person name="Hamamoto M."/>
            <person name="Hiraoka Y."/>
            <person name="Horinouchi S."/>
            <person name="Yoshida M."/>
        </authorList>
    </citation>
    <scope>SUBCELLULAR LOCATION [LARGE SCALE ANALYSIS]</scope>
</reference>
<evidence type="ECO:0000250" key="1">
    <source>
        <dbReference type="UniProtKB" id="D6W3G1"/>
    </source>
</evidence>
<evidence type="ECO:0000250" key="2">
    <source>
        <dbReference type="UniProtKB" id="P38991"/>
    </source>
</evidence>
<evidence type="ECO:0000255" key="3">
    <source>
        <dbReference type="PROSITE-ProRule" id="PRU00159"/>
    </source>
</evidence>
<evidence type="ECO:0000255" key="4">
    <source>
        <dbReference type="PROSITE-ProRule" id="PRU10027"/>
    </source>
</evidence>
<evidence type="ECO:0000269" key="5">
    <source>
    </source>
</evidence>
<evidence type="ECO:0000269" key="6">
    <source>
    </source>
</evidence>
<evidence type="ECO:0000269" key="7">
    <source>
    </source>
</evidence>
<evidence type="ECO:0000269" key="8">
    <source>
    </source>
</evidence>
<evidence type="ECO:0000305" key="9"/>
<evidence type="ECO:0000305" key="10">
    <source>
    </source>
</evidence>
<evidence type="ECO:0000305" key="11">
    <source>
    </source>
</evidence>
<evidence type="ECO:0000305" key="12">
    <source>
    </source>
</evidence>
<feature type="chain" id="PRO_0000085634" description="Aurora kinase">
    <location>
        <begin position="1"/>
        <end position="355"/>
    </location>
</feature>
<feature type="domain" description="Protein kinase" evidence="3">
    <location>
        <begin position="89"/>
        <end position="340"/>
    </location>
</feature>
<feature type="active site" description="Proton acceptor" evidence="3 4">
    <location>
        <position position="212"/>
    </location>
</feature>
<feature type="binding site" evidence="3">
    <location>
        <begin position="95"/>
        <end position="103"/>
    </location>
    <ligand>
        <name>ATP</name>
        <dbReference type="ChEBI" id="CHEBI:30616"/>
    </ligand>
</feature>
<feature type="binding site" evidence="9">
    <location>
        <position position="118"/>
    </location>
    <ligand>
        <name>ATP</name>
        <dbReference type="ChEBI" id="CHEBI:30616"/>
    </ligand>
</feature>
<feature type="mutagenesis site" description="No phosphorylation of bir1; inhibits cytokinesis in a dominant negative manner." evidence="6">
    <original>K</original>
    <variation>R</variation>
    <location>
        <position position="118"/>
    </location>
</feature>
<organism>
    <name type="scientific">Schizosaccharomyces pombe (strain 972 / ATCC 24843)</name>
    <name type="common">Fission yeast</name>
    <dbReference type="NCBI Taxonomy" id="284812"/>
    <lineage>
        <taxon>Eukaryota</taxon>
        <taxon>Fungi</taxon>
        <taxon>Dikarya</taxon>
        <taxon>Ascomycota</taxon>
        <taxon>Taphrinomycotina</taxon>
        <taxon>Schizosaccharomycetes</taxon>
        <taxon>Schizosaccharomycetales</taxon>
        <taxon>Schizosaccharomycetaceae</taxon>
        <taxon>Schizosaccharomyces</taxon>
    </lineage>
</organism>
<name>AURK_SCHPO</name>
<dbReference type="EC" id="2.7.11.1" evidence="2"/>
<dbReference type="EMBL" id="CU329672">
    <property type="protein sequence ID" value="CAD88263.1"/>
    <property type="molecule type" value="Genomic_DNA"/>
</dbReference>
<dbReference type="PIR" id="T41298">
    <property type="entry name" value="T41298"/>
</dbReference>
<dbReference type="RefSeq" id="NP_001018849.1">
    <property type="nucleotide sequence ID" value="NM_001022711.2"/>
</dbReference>
<dbReference type="SMR" id="O59790"/>
<dbReference type="BioGRID" id="280112">
    <property type="interactions" value="50"/>
</dbReference>
<dbReference type="DIP" id="DIP-44220N"/>
<dbReference type="FunCoup" id="O59790">
    <property type="interactions" value="545"/>
</dbReference>
<dbReference type="IntAct" id="O59790">
    <property type="interactions" value="4"/>
</dbReference>
<dbReference type="MINT" id="O59790"/>
<dbReference type="STRING" id="284812.O59790"/>
<dbReference type="SwissPalm" id="O59790"/>
<dbReference type="PaxDb" id="4896-SPCC320.13c.1"/>
<dbReference type="EnsemblFungi" id="SPCC320.13c.1">
    <property type="protein sequence ID" value="SPCC320.13c.1:pep"/>
    <property type="gene ID" value="SPCC320.13c"/>
</dbReference>
<dbReference type="GeneID" id="3361036"/>
<dbReference type="KEGG" id="spo:3361036"/>
<dbReference type="PomBase" id="SPCC320.13c">
    <property type="gene designation" value="ark1"/>
</dbReference>
<dbReference type="VEuPathDB" id="FungiDB:SPCC320.13c"/>
<dbReference type="eggNOG" id="KOG0580">
    <property type="taxonomic scope" value="Eukaryota"/>
</dbReference>
<dbReference type="HOGENOM" id="CLU_000288_63_6_1"/>
<dbReference type="InParanoid" id="O59790"/>
<dbReference type="OMA" id="KNRPCIK"/>
<dbReference type="PhylomeDB" id="O59790"/>
<dbReference type="BRENDA" id="2.7.11.1">
    <property type="organism ID" value="5613"/>
</dbReference>
<dbReference type="Reactome" id="R-SPO-8854050">
    <property type="pathway name" value="FBXL7 down-regulates AURKA during mitotic entry and in early mitosis"/>
</dbReference>
<dbReference type="PRO" id="PR:O59790"/>
<dbReference type="Proteomes" id="UP000002485">
    <property type="component" value="Chromosome III"/>
</dbReference>
<dbReference type="GO" id="GO:0032133">
    <property type="term" value="C:chromosome passenger complex"/>
    <property type="evidence" value="ECO:0000314"/>
    <property type="project" value="PomBase"/>
</dbReference>
<dbReference type="GO" id="GO:0000775">
    <property type="term" value="C:chromosome, centromeric region"/>
    <property type="evidence" value="ECO:0000314"/>
    <property type="project" value="PomBase"/>
</dbReference>
<dbReference type="GO" id="GO:0000781">
    <property type="term" value="C:chromosome, telomeric region"/>
    <property type="evidence" value="ECO:0000314"/>
    <property type="project" value="PomBase"/>
</dbReference>
<dbReference type="GO" id="GO:0005737">
    <property type="term" value="C:cytoplasm"/>
    <property type="evidence" value="ECO:0007669"/>
    <property type="project" value="UniProtKB-KW"/>
</dbReference>
<dbReference type="GO" id="GO:0000939">
    <property type="term" value="C:inner kinetochore"/>
    <property type="evidence" value="ECO:0000314"/>
    <property type="project" value="PomBase"/>
</dbReference>
<dbReference type="GO" id="GO:0000776">
    <property type="term" value="C:kinetochore"/>
    <property type="evidence" value="ECO:0000314"/>
    <property type="project" value="PomBase"/>
</dbReference>
<dbReference type="GO" id="GO:0072687">
    <property type="term" value="C:meiotic spindle"/>
    <property type="evidence" value="ECO:0000314"/>
    <property type="project" value="PomBase"/>
</dbReference>
<dbReference type="GO" id="GO:1990385">
    <property type="term" value="C:meiotic spindle midzone"/>
    <property type="evidence" value="ECO:0000314"/>
    <property type="project" value="PomBase"/>
</dbReference>
<dbReference type="GO" id="GO:1990023">
    <property type="term" value="C:mitotic spindle midzone"/>
    <property type="evidence" value="ECO:0000314"/>
    <property type="project" value="PomBase"/>
</dbReference>
<dbReference type="GO" id="GO:0140602">
    <property type="term" value="C:nucleolar peripheral inclusion body"/>
    <property type="evidence" value="ECO:0000314"/>
    <property type="project" value="PomBase"/>
</dbReference>
<dbReference type="GO" id="GO:0005634">
    <property type="term" value="C:nucleus"/>
    <property type="evidence" value="ECO:0000318"/>
    <property type="project" value="GO_Central"/>
</dbReference>
<dbReference type="GO" id="GO:0005876">
    <property type="term" value="C:spindle microtubule"/>
    <property type="evidence" value="ECO:0000318"/>
    <property type="project" value="GO_Central"/>
</dbReference>
<dbReference type="GO" id="GO:0051233">
    <property type="term" value="C:spindle midzone"/>
    <property type="evidence" value="ECO:0000318"/>
    <property type="project" value="GO_Central"/>
</dbReference>
<dbReference type="GO" id="GO:0000922">
    <property type="term" value="C:spindle pole"/>
    <property type="evidence" value="ECO:0000318"/>
    <property type="project" value="GO_Central"/>
</dbReference>
<dbReference type="GO" id="GO:0005524">
    <property type="term" value="F:ATP binding"/>
    <property type="evidence" value="ECO:0007669"/>
    <property type="project" value="UniProtKB-KW"/>
</dbReference>
<dbReference type="GO" id="GO:0035175">
    <property type="term" value="F:histone H3S10 kinase activity"/>
    <property type="evidence" value="ECO:0000314"/>
    <property type="project" value="PomBase"/>
</dbReference>
<dbReference type="GO" id="GO:0106310">
    <property type="term" value="F:protein serine kinase activity"/>
    <property type="evidence" value="ECO:0007669"/>
    <property type="project" value="RHEA"/>
</dbReference>
<dbReference type="GO" id="GO:0004674">
    <property type="term" value="F:protein serine/threonine kinase activity"/>
    <property type="evidence" value="ECO:0000314"/>
    <property type="project" value="PomBase"/>
</dbReference>
<dbReference type="GO" id="GO:0051316">
    <property type="term" value="P:attachment of meiotic spindle microtubules to kinetochore"/>
    <property type="evidence" value="ECO:0000315"/>
    <property type="project" value="PomBase"/>
</dbReference>
<dbReference type="GO" id="GO:0120110">
    <property type="term" value="P:interphase mitotic telomere clustering"/>
    <property type="evidence" value="ECO:0000315"/>
    <property type="project" value="PomBase"/>
</dbReference>
<dbReference type="GO" id="GO:0033316">
    <property type="term" value="P:meiotic spindle assembly checkpoint signaling"/>
    <property type="evidence" value="ECO:0000315"/>
    <property type="project" value="PomBase"/>
</dbReference>
<dbReference type="GO" id="GO:1990758">
    <property type="term" value="P:mitotic sister chromatid biorientation"/>
    <property type="evidence" value="ECO:0000315"/>
    <property type="project" value="PomBase"/>
</dbReference>
<dbReference type="GO" id="GO:0000070">
    <property type="term" value="P:mitotic sister chromatid segregation"/>
    <property type="evidence" value="ECO:0000314"/>
    <property type="project" value="PomBase"/>
</dbReference>
<dbReference type="GO" id="GO:0007094">
    <property type="term" value="P:mitotic spindle assembly checkpoint signaling"/>
    <property type="evidence" value="ECO:0000315"/>
    <property type="project" value="PomBase"/>
</dbReference>
<dbReference type="GO" id="GO:0007052">
    <property type="term" value="P:mitotic spindle organization"/>
    <property type="evidence" value="ECO:0000318"/>
    <property type="project" value="GO_Central"/>
</dbReference>
<dbReference type="GO" id="GO:0010971">
    <property type="term" value="P:positive regulation of G2/M transition of mitotic cell cycle"/>
    <property type="evidence" value="ECO:0000315"/>
    <property type="project" value="PomBase"/>
</dbReference>
<dbReference type="GO" id="GO:1905561">
    <property type="term" value="P:positive regulation of kinetochore assembly"/>
    <property type="evidence" value="ECO:0000269"/>
    <property type="project" value="PomBase"/>
</dbReference>
<dbReference type="GO" id="GO:0090267">
    <property type="term" value="P:positive regulation of mitotic cell cycle spindle assembly checkpoint"/>
    <property type="evidence" value="ECO:0000315"/>
    <property type="project" value="PomBase"/>
</dbReference>
<dbReference type="GO" id="GO:1903380">
    <property type="term" value="P:positive regulation of mitotic chromosome condensation"/>
    <property type="evidence" value="ECO:0000315"/>
    <property type="project" value="PomBase"/>
</dbReference>
<dbReference type="GO" id="GO:1905824">
    <property type="term" value="P:positive regulation of mitotic sister chromatid arm separation"/>
    <property type="evidence" value="ECO:0000315"/>
    <property type="project" value="PomBase"/>
</dbReference>
<dbReference type="GO" id="GO:0140429">
    <property type="term" value="P:positive regulation of mitotic sister chromatid biorientation"/>
    <property type="evidence" value="ECO:0000316"/>
    <property type="project" value="PomBase"/>
</dbReference>
<dbReference type="GO" id="GO:0032465">
    <property type="term" value="P:regulation of cytokinesis"/>
    <property type="evidence" value="ECO:0000318"/>
    <property type="project" value="GO_Central"/>
</dbReference>
<dbReference type="GO" id="GO:1902412">
    <property type="term" value="P:regulation of mitotic cytokinesis"/>
    <property type="evidence" value="ECO:0000315"/>
    <property type="project" value="PomBase"/>
</dbReference>
<dbReference type="GO" id="GO:0033047">
    <property type="term" value="P:regulation of mitotic sister chromatid segregation"/>
    <property type="evidence" value="ECO:0000315"/>
    <property type="project" value="PomBase"/>
</dbReference>
<dbReference type="GO" id="GO:1904967">
    <property type="term" value="P:regulation of spindle attachment to meiosis I kinetochore"/>
    <property type="evidence" value="ECO:0000315"/>
    <property type="project" value="PomBase"/>
</dbReference>
<dbReference type="GO" id="GO:0140273">
    <property type="term" value="P:repair of mitotic kinetochore microtubule attachment defect"/>
    <property type="evidence" value="ECO:0000269"/>
    <property type="project" value="PomBase"/>
</dbReference>
<dbReference type="CDD" id="cd14007">
    <property type="entry name" value="STKc_Aurora"/>
    <property type="match status" value="1"/>
</dbReference>
<dbReference type="FunFam" id="3.30.200.20:FF:000042">
    <property type="entry name" value="Aurora kinase A"/>
    <property type="match status" value="1"/>
</dbReference>
<dbReference type="FunFam" id="1.10.510.10:FF:000235">
    <property type="entry name" value="Serine/threonine-protein kinase ark1"/>
    <property type="match status" value="1"/>
</dbReference>
<dbReference type="Gene3D" id="1.10.510.10">
    <property type="entry name" value="Transferase(Phosphotransferase) domain 1"/>
    <property type="match status" value="1"/>
</dbReference>
<dbReference type="InterPro" id="IPR030616">
    <property type="entry name" value="Aur-like"/>
</dbReference>
<dbReference type="InterPro" id="IPR011009">
    <property type="entry name" value="Kinase-like_dom_sf"/>
</dbReference>
<dbReference type="InterPro" id="IPR000719">
    <property type="entry name" value="Prot_kinase_dom"/>
</dbReference>
<dbReference type="InterPro" id="IPR017441">
    <property type="entry name" value="Protein_kinase_ATP_BS"/>
</dbReference>
<dbReference type="InterPro" id="IPR008271">
    <property type="entry name" value="Ser/Thr_kinase_AS"/>
</dbReference>
<dbReference type="PANTHER" id="PTHR24350">
    <property type="entry name" value="SERINE/THREONINE-PROTEIN KINASE IAL-RELATED"/>
    <property type="match status" value="1"/>
</dbReference>
<dbReference type="Pfam" id="PF00069">
    <property type="entry name" value="Pkinase"/>
    <property type="match status" value="1"/>
</dbReference>
<dbReference type="SMART" id="SM00220">
    <property type="entry name" value="S_TKc"/>
    <property type="match status" value="1"/>
</dbReference>
<dbReference type="SUPFAM" id="SSF56112">
    <property type="entry name" value="Protein kinase-like (PK-like)"/>
    <property type="match status" value="1"/>
</dbReference>
<dbReference type="PROSITE" id="PS00107">
    <property type="entry name" value="PROTEIN_KINASE_ATP"/>
    <property type="match status" value="1"/>
</dbReference>
<dbReference type="PROSITE" id="PS50011">
    <property type="entry name" value="PROTEIN_KINASE_DOM"/>
    <property type="match status" value="1"/>
</dbReference>
<dbReference type="PROSITE" id="PS00108">
    <property type="entry name" value="PROTEIN_KINASE_ST"/>
    <property type="match status" value="1"/>
</dbReference>
<proteinExistence type="evidence at protein level"/>
<gene>
    <name type="primary">ark1</name>
    <name type="synonym">sex1</name>
    <name type="ORF">SPCC320.13c</name>
    <name type="ORF">SPCC330.16</name>
</gene>
<sequence>MSDSKLADSLNCLSVSTPSTTANPGRQQLLRLAVSNQRQVNNVSLANGKENKRTSNSKFNSSLRKIEEPIAGVPSSAGPQWREFHIGMFEIGKPLGKGKFGRVYLAKEKKTGFIVALKTLHKSELVQSKIEKQVRREIEIQSNLRHKNILRLYGHFHDEKRIYLILEFAGRGELYQHLRRAKRFSEEVASKYIFQMANALSYLHKKHVIHRDIKPENILLGIDGEIKLSDFGWSVHAPSNRRTTLCGTLDYLPPEMVEGKEHTEKVDLWSLGVLTYEFLVGAPPFEDMSGHSATYKRIAKVDLKIPSFVPPDARDLISRLLQHNPEKRMSLEQVMRHPWIVKYKDSWTRKSSESS</sequence>
<comment type="function">
    <text evidence="5 6 7">Component of the chromosomal passenger complex (CPC), a complex that acts as a key regulator of chromosome segregation and cytokinesis (PubMed:11950927, PubMed:12676091). Has a role in error-correction of aberrent kinetochore-microtubule attachments to ensure that sister kinetochores become bioriented and connect to opposite poles by promoting spindle assembly checkpoint signaling (PubMed:11792803, PubMed:11950927, PubMed:12676091). Ark1 is also required for phosphorylation of histone H3 that accompanies chromosome condensation and condensin recruitment to mitotic chromatin (PubMed:11792803, PubMed:12676091).</text>
</comment>
<comment type="catalytic activity">
    <reaction evidence="1">
        <text>L-seryl-[protein] + ATP = O-phospho-L-seryl-[protein] + ADP + H(+)</text>
        <dbReference type="Rhea" id="RHEA:17989"/>
        <dbReference type="Rhea" id="RHEA-COMP:9863"/>
        <dbReference type="Rhea" id="RHEA-COMP:11604"/>
        <dbReference type="ChEBI" id="CHEBI:15378"/>
        <dbReference type="ChEBI" id="CHEBI:29999"/>
        <dbReference type="ChEBI" id="CHEBI:30616"/>
        <dbReference type="ChEBI" id="CHEBI:83421"/>
        <dbReference type="ChEBI" id="CHEBI:456216"/>
        <dbReference type="EC" id="2.7.11.1"/>
    </reaction>
</comment>
<comment type="catalytic activity">
    <reaction>
        <text>L-threonyl-[protein] + ATP = O-phospho-L-threonyl-[protein] + ADP + H(+)</text>
        <dbReference type="Rhea" id="RHEA:46608"/>
        <dbReference type="Rhea" id="RHEA-COMP:11060"/>
        <dbReference type="Rhea" id="RHEA-COMP:11605"/>
        <dbReference type="ChEBI" id="CHEBI:15378"/>
        <dbReference type="ChEBI" id="CHEBI:30013"/>
        <dbReference type="ChEBI" id="CHEBI:30616"/>
        <dbReference type="ChEBI" id="CHEBI:61977"/>
        <dbReference type="ChEBI" id="CHEBI:456216"/>
        <dbReference type="EC" id="2.7.11.1"/>
    </reaction>
</comment>
<comment type="subunit">
    <text evidence="7 10 11 12">Component of the CPC complex at least composed of ark1, bir1 and pic1 (Probable). Interacts with the mitotic checkpoint complex (MCC) subunit mad3 (PubMed:12676091).</text>
</comment>
<comment type="subcellular location">
    <subcellularLocation>
        <location evidence="8">Nucleus</location>
    </subcellularLocation>
    <subcellularLocation>
        <location evidence="8">Cytoplasm</location>
        <location evidence="8">Cytoskeleton</location>
        <location evidence="8">Spindle</location>
    </subcellularLocation>
    <text>Associates with the elongating spindle during anaphase.</text>
</comment>
<comment type="similarity">
    <text evidence="3">Belongs to the protein kinase superfamily. Ser/Thr protein kinase family. Aurora subfamily.</text>
</comment>
<protein>
    <recommendedName>
        <fullName evidence="9">Aurora kinase</fullName>
        <ecNumber evidence="2">2.7.11.1</ecNumber>
    </recommendedName>
    <alternativeName>
        <fullName>Serine/threonine-protein kinase ark1</fullName>
    </alternativeName>
</protein>
<keyword id="KW-0067">ATP-binding</keyword>
<keyword id="KW-0963">Cytoplasm</keyword>
<keyword id="KW-0206">Cytoskeleton</keyword>
<keyword id="KW-0418">Kinase</keyword>
<keyword id="KW-0547">Nucleotide-binding</keyword>
<keyword id="KW-0539">Nucleus</keyword>
<keyword id="KW-1185">Reference proteome</keyword>
<keyword id="KW-0723">Serine/threonine-protein kinase</keyword>
<keyword id="KW-0808">Transferase</keyword>
<accession>O59790</accession>